<organism>
    <name type="scientific">Conus monile</name>
    <name type="common">Necklace cone</name>
    <dbReference type="NCBI Taxonomy" id="351660"/>
    <lineage>
        <taxon>Eukaryota</taxon>
        <taxon>Metazoa</taxon>
        <taxon>Spiralia</taxon>
        <taxon>Lophotrochozoa</taxon>
        <taxon>Mollusca</taxon>
        <taxon>Gastropoda</taxon>
        <taxon>Caenogastropoda</taxon>
        <taxon>Neogastropoda</taxon>
        <taxon>Conoidea</taxon>
        <taxon>Conidae</taxon>
        <taxon>Conus</taxon>
        <taxon>Strategoconus</taxon>
    </lineage>
</organism>
<accession>A0A4Y5X1A7</accession>
<name>CESS3_CONMO</name>
<dbReference type="EMBL" id="MK263338">
    <property type="protein sequence ID" value="QDE14046.1"/>
    <property type="molecule type" value="mRNA"/>
</dbReference>
<dbReference type="SMR" id="A0A4Y5X1A7"/>
<dbReference type="GO" id="GO:0005615">
    <property type="term" value="C:extracellular space"/>
    <property type="evidence" value="ECO:0007669"/>
    <property type="project" value="TreeGrafter"/>
</dbReference>
<dbReference type="GO" id="GO:0030141">
    <property type="term" value="C:secretory granule"/>
    <property type="evidence" value="ECO:0007669"/>
    <property type="project" value="TreeGrafter"/>
</dbReference>
<dbReference type="GO" id="GO:0005185">
    <property type="term" value="F:neurohypophyseal hormone activity"/>
    <property type="evidence" value="ECO:0007669"/>
    <property type="project" value="InterPro"/>
</dbReference>
<dbReference type="GO" id="GO:0090729">
    <property type="term" value="F:toxin activity"/>
    <property type="evidence" value="ECO:0007669"/>
    <property type="project" value="UniProtKB-KW"/>
</dbReference>
<dbReference type="Gene3D" id="2.60.9.10">
    <property type="entry name" value="Neurohypophysial hormone domain"/>
    <property type="match status" value="1"/>
</dbReference>
<dbReference type="InterPro" id="IPR000981">
    <property type="entry name" value="Neurhyp_horm"/>
</dbReference>
<dbReference type="InterPro" id="IPR036387">
    <property type="entry name" value="Neurhyp_horm_dom_sf"/>
</dbReference>
<dbReference type="InterPro" id="IPR022423">
    <property type="entry name" value="Neurohypophysial_hormone_CS"/>
</dbReference>
<dbReference type="PANTHER" id="PTHR11681:SF5">
    <property type="entry name" value="ISOTOCIN"/>
    <property type="match status" value="1"/>
</dbReference>
<dbReference type="PANTHER" id="PTHR11681">
    <property type="entry name" value="NEUROPHYSIN"/>
    <property type="match status" value="1"/>
</dbReference>
<dbReference type="Pfam" id="PF00184">
    <property type="entry name" value="Hormone_5"/>
    <property type="match status" value="1"/>
</dbReference>
<dbReference type="PRINTS" id="PR00831">
    <property type="entry name" value="NEUROPHYSIN"/>
</dbReference>
<dbReference type="SMART" id="SM00003">
    <property type="entry name" value="NH"/>
    <property type="match status" value="1"/>
</dbReference>
<dbReference type="SUPFAM" id="SSF49606">
    <property type="entry name" value="Neurophysin II"/>
    <property type="match status" value="1"/>
</dbReference>
<dbReference type="PROSITE" id="PS00264">
    <property type="entry name" value="NEUROHYPOPHYS_HORM"/>
    <property type="match status" value="1"/>
</dbReference>
<sequence>ACFIRNCPKGGKRNVDEGPTKPCMFCSFGQCVAPHTCCGEKGCEMGTVDANMCQEENESPIPCHVFGKRCLLNHPGNSHGNCVTYGICCSHDTCTVHLACM</sequence>
<feature type="signal peptide" evidence="2">
    <location>
        <begin position="1" status="less than"/>
        <end position="1"/>
    </location>
</feature>
<feature type="chain" id="PRO_0000450740" description="Conopressin/conophysin, isoform 3">
    <location>
        <begin position="2"/>
        <end position="101"/>
    </location>
</feature>
<feature type="peptide" id="PRO_0000450741" description="Conopressin-K" evidence="3">
    <location>
        <begin position="2"/>
        <end position="10"/>
    </location>
</feature>
<feature type="propeptide" id="PRO_0000450742" evidence="2">
    <location>
        <begin position="11"/>
        <end position="18"/>
    </location>
</feature>
<feature type="chain" id="PRO_0000450743" description="Conophysin" evidence="3">
    <location>
        <begin position="14"/>
        <end position="101"/>
    </location>
</feature>
<feature type="modified residue" description="Glycine amide" evidence="3">
    <location>
        <position position="10"/>
    </location>
</feature>
<feature type="disulfide bond" evidence="2">
    <location>
        <begin position="2"/>
        <end position="7"/>
    </location>
</feature>
<feature type="disulfide bond" evidence="1">
    <location>
        <begin position="23"/>
        <end position="63"/>
    </location>
</feature>
<feature type="disulfide bond" evidence="1">
    <location>
        <begin position="26"/>
        <end position="37"/>
    </location>
</feature>
<feature type="disulfide bond" evidence="1">
    <location>
        <begin position="31"/>
        <end position="53"/>
    </location>
</feature>
<feature type="disulfide bond" evidence="1">
    <location>
        <begin position="38"/>
        <end position="43"/>
    </location>
</feature>
<feature type="disulfide bond" evidence="1">
    <location>
        <begin position="70"/>
        <end position="88"/>
    </location>
</feature>
<feature type="disulfide bond" evidence="1">
    <location>
        <begin position="82"/>
        <end position="100"/>
    </location>
</feature>
<feature type="disulfide bond" evidence="1">
    <location>
        <begin position="89"/>
        <end position="94"/>
    </location>
</feature>
<feature type="non-terminal residue">
    <location>
        <position position="1"/>
    </location>
</feature>
<reference key="1">
    <citation type="journal article" date="2020" name="Biochim. Biophys. Acta">
        <title>Cone snail analogs of the pituitary hormones oxytocin/vasopressin and their carrier protein neurophysin. Proteomic and transcriptomic identification of conopressins and conophysins.</title>
        <authorList>
            <person name="Kumar S."/>
            <person name="Vijayasarathy M."/>
            <person name="Venkatesha M.A."/>
            <person name="Sunita P."/>
            <person name="Balaram P."/>
        </authorList>
    </citation>
    <scope>NUCLEOTIDE SEQUENCE [MRNA]</scope>
    <scope>PROTEIN SEQUENCE OF 2-10 AND 14-68</scope>
    <scope>AMIDATION AT GLY-10</scope>
    <scope>IDENTIFICATION BY MASS SPECTROMETRY</scope>
    <scope>SUBCELLULAR LOCATION</scope>
    <scope>SYNTHESIS OF 2-10</scope>
    <source>
        <tissue>Venom</tissue>
        <tissue>Venom duct</tissue>
    </source>
</reference>
<proteinExistence type="evidence at protein level"/>
<keyword id="KW-0027">Amidation</keyword>
<keyword id="KW-0165">Cleavage on pair of basic residues</keyword>
<keyword id="KW-0903">Direct protein sequencing</keyword>
<keyword id="KW-1015">Disulfide bond</keyword>
<keyword id="KW-1213">G-protein coupled receptor impairing toxin</keyword>
<keyword id="KW-0964">Secreted</keyword>
<keyword id="KW-0732">Signal</keyword>
<keyword id="KW-0800">Toxin</keyword>
<comment type="function">
    <molecule>Conopressin-K</molecule>
    <text evidence="2">Targets vasopressin-oxytocin related receptors. Is more active on fish receptors than on their human counterparts, supporting an evolved role of this conopressin in the envenomation process. Acts as an agonist on zebrafish vasopressin receptors V1a1R (EC(50)=10.6 nM), V1a2R (EC(50)=44.06 nM, partial agonist), V2R (EC(50)=299.2 nM) and oxytocin receptor (EC(50)=353.73 nM, partial agonist). Shows a weaker activity on human receptors AVPR1B (EC(50)=51.92 nM), AVPR1A (EC(50)=123.78 nM), AVPR2 (EC(50)=299.2 nM) and oxytocin (OXTR) receptor (EC(50)=455.66 nM, partial agonist). In vivo, exhibits grooming and scratching behavior in mice, following intracerebral injection.</text>
</comment>
<comment type="subcellular location">
    <subcellularLocation>
        <location evidence="3">Secreted</location>
    </subcellularLocation>
</comment>
<comment type="tissue specificity">
    <text evidence="6">Expressed by the venom gland.</text>
</comment>
<comment type="domain">
    <text evidence="5">The cysteine framework of the conopressin is C-C.</text>
</comment>
<comment type="mass spectrometry">
    <molecule>Conophysin</molecule>
    <text>Monoisotopic mass.</text>
</comment>
<comment type="mass spectrometry">
    <molecule>Conophysin</molecule>
    <text>Monoisotopic mass of protein with probable hydroxyPro.</text>
</comment>
<comment type="mass spectrometry">
    <molecule>Conophysin</molecule>
    <text>Monoisotopic mass of protein with probable gamma-carboxylation.</text>
</comment>
<comment type="mass spectrometry">
    <molecule>Conopressin-K</molecule>
</comment>
<comment type="miscellaneous">
    <text evidence="6">The letter 'K' in the name 'Conopressin-K' proposed by Kumar and colleagues stands for the eighth residue, which differs between conopressins.</text>
</comment>
<comment type="similarity">
    <text evidence="5">Belongs to the vasopressin/oxytocin family.</text>
</comment>
<evidence type="ECO:0000250" key="1">
    <source>
        <dbReference type="UniProtKB" id="P01175"/>
    </source>
</evidence>
<evidence type="ECO:0000250" key="2">
    <source>
        <dbReference type="UniProtKB" id="P05486"/>
    </source>
</evidence>
<evidence type="ECO:0000269" key="3">
    <source>
    </source>
</evidence>
<evidence type="ECO:0000303" key="4">
    <source>
    </source>
</evidence>
<evidence type="ECO:0000305" key="5"/>
<evidence type="ECO:0000305" key="6">
    <source>
    </source>
</evidence>
<protein>
    <recommendedName>
        <fullName evidence="4">Conopressin/conophysin, isoform 3</fullName>
    </recommendedName>
    <component>
        <recommendedName>
            <fullName evidence="4">Conopressin-K</fullName>
        </recommendedName>
    </component>
    <component>
        <recommendedName>
            <fullName evidence="4">Conophysin</fullName>
        </recommendedName>
    </component>
</protein>